<name>RL2B_YEAST</name>
<proteinExistence type="evidence at protein level"/>
<accession>P0CX46</accession>
<accession>D6VTR2</accession>
<accession>P05736</accession>
<dbReference type="EMBL" id="U17360">
    <property type="protein sequence ID" value="AAA92284.1"/>
    <property type="molecule type" value="mRNA"/>
</dbReference>
<dbReference type="EMBL" id="Z46881">
    <property type="protein sequence ID" value="CAA86974.1"/>
    <property type="molecule type" value="Genomic_DNA"/>
</dbReference>
<dbReference type="EMBL" id="BK006942">
    <property type="protein sequence ID" value="DAA08527.1"/>
    <property type="molecule type" value="Genomic_DNA"/>
</dbReference>
<dbReference type="PIR" id="S50243">
    <property type="entry name" value="S50243"/>
</dbReference>
<dbReference type="RefSeq" id="NP_012246.1">
    <property type="nucleotide sequence ID" value="NM_001179368.1"/>
</dbReference>
<dbReference type="PDB" id="4V8T">
    <property type="method" value="EM"/>
    <property type="resolution" value="8.10 A"/>
    <property type="chains" value="A=1-254"/>
</dbReference>
<dbReference type="PDB" id="4V8Y">
    <property type="method" value="EM"/>
    <property type="resolution" value="4.30 A"/>
    <property type="chains" value="BA=2-254"/>
</dbReference>
<dbReference type="PDB" id="4V8Z">
    <property type="method" value="EM"/>
    <property type="resolution" value="6.60 A"/>
    <property type="chains" value="BA=2-254"/>
</dbReference>
<dbReference type="PDBsum" id="4V8T"/>
<dbReference type="PDBsum" id="4V8Y"/>
<dbReference type="PDBsum" id="4V8Z"/>
<dbReference type="SMR" id="P0CX46"/>
<dbReference type="BioGRID" id="31187">
    <property type="interactions" value="467"/>
</dbReference>
<dbReference type="BioGRID" id="34970">
    <property type="interactions" value="76"/>
</dbReference>
<dbReference type="ComplexPortal" id="CPX-1601">
    <property type="entry name" value="60S cytosolic large ribosomal subunit"/>
</dbReference>
<dbReference type="FunCoup" id="P0CX46">
    <property type="interactions" value="1108"/>
</dbReference>
<dbReference type="IntAct" id="P0CX46">
    <property type="interactions" value="2"/>
</dbReference>
<dbReference type="MINT" id="P0CX46"/>
<dbReference type="CarbonylDB" id="P0CX46"/>
<dbReference type="iPTMnet" id="P0CX46"/>
<dbReference type="EnsemblFungi" id="YFR031C-A_mRNA">
    <property type="protein sequence ID" value="YFR031C-A"/>
    <property type="gene ID" value="YFR031C-A"/>
</dbReference>
<dbReference type="EnsemblFungi" id="YIL018W_mRNA">
    <property type="protein sequence ID" value="YIL018W"/>
    <property type="gene ID" value="YIL018W"/>
</dbReference>
<dbReference type="GeneID" id="854794"/>
<dbReference type="KEGG" id="sce:YFR031C-A"/>
<dbReference type="KEGG" id="sce:YIL018W"/>
<dbReference type="AGR" id="SGD:S000001280"/>
<dbReference type="SGD" id="S000001280">
    <property type="gene designation" value="RPL2B"/>
</dbReference>
<dbReference type="VEuPathDB" id="FungiDB:YFR031C-A"/>
<dbReference type="VEuPathDB" id="FungiDB:YIL018W"/>
<dbReference type="GeneTree" id="ENSGT00940000153244"/>
<dbReference type="HOGENOM" id="CLU_036235_0_3_1"/>
<dbReference type="InParanoid" id="P0CX46"/>
<dbReference type="OMA" id="HPYKFKM"/>
<dbReference type="OrthoDB" id="10267824at2759"/>
<dbReference type="BioCyc" id="YEAST:G3O-31294-MONOMER"/>
<dbReference type="Reactome" id="R-SCE-156827">
    <property type="pathway name" value="L13a-mediated translational silencing of Ceruloplasmin expression"/>
</dbReference>
<dbReference type="Reactome" id="R-SCE-1799339">
    <property type="pathway name" value="SRP-dependent cotranslational protein targeting to membrane"/>
</dbReference>
<dbReference type="Reactome" id="R-SCE-72689">
    <property type="pathway name" value="Formation of a pool of free 40S subunits"/>
</dbReference>
<dbReference type="Reactome" id="R-SCE-72706">
    <property type="pathway name" value="GTP hydrolysis and joining of the 60S ribosomal subunit"/>
</dbReference>
<dbReference type="Reactome" id="R-SCE-975956">
    <property type="pathway name" value="Nonsense Mediated Decay (NMD) independent of the Exon Junction Complex (EJC)"/>
</dbReference>
<dbReference type="Reactome" id="R-SCE-975957">
    <property type="pathway name" value="Nonsense Mediated Decay (NMD) enhanced by the Exon Junction Complex (EJC)"/>
</dbReference>
<dbReference type="BioGRID-ORCS" id="850590">
    <property type="hits" value="7 hits in 10 CRISPR screens"/>
</dbReference>
<dbReference type="BioGRID-ORCS" id="854794">
    <property type="hits" value="9 hits in 10 CRISPR screens"/>
</dbReference>
<dbReference type="PRO" id="PR:P0CX46"/>
<dbReference type="Proteomes" id="UP000002311">
    <property type="component" value="Chromosome IX"/>
</dbReference>
<dbReference type="RNAct" id="P0CX46">
    <property type="molecule type" value="protein"/>
</dbReference>
<dbReference type="ExpressionAtlas" id="P0CX46">
    <property type="expression patterns" value="baseline and differential"/>
</dbReference>
<dbReference type="GO" id="GO:0005829">
    <property type="term" value="C:cytosol"/>
    <property type="evidence" value="ECO:0000304"/>
    <property type="project" value="Reactome"/>
</dbReference>
<dbReference type="GO" id="GO:0022625">
    <property type="term" value="C:cytosolic large ribosomal subunit"/>
    <property type="evidence" value="ECO:0000314"/>
    <property type="project" value="SGD"/>
</dbReference>
<dbReference type="GO" id="GO:0003723">
    <property type="term" value="F:RNA binding"/>
    <property type="evidence" value="ECO:0000318"/>
    <property type="project" value="GO_Central"/>
</dbReference>
<dbReference type="GO" id="GO:0019843">
    <property type="term" value="F:rRNA binding"/>
    <property type="evidence" value="ECO:0007669"/>
    <property type="project" value="UniProtKB-KW"/>
</dbReference>
<dbReference type="GO" id="GO:0003735">
    <property type="term" value="F:structural constituent of ribosome"/>
    <property type="evidence" value="ECO:0000314"/>
    <property type="project" value="SGD"/>
</dbReference>
<dbReference type="GO" id="GO:0002181">
    <property type="term" value="P:cytoplasmic translation"/>
    <property type="evidence" value="ECO:0000314"/>
    <property type="project" value="SGD"/>
</dbReference>
<dbReference type="FunFam" id="2.40.50.140:FF:000020">
    <property type="entry name" value="60S ribosomal protein L2"/>
    <property type="match status" value="1"/>
</dbReference>
<dbReference type="FunFam" id="4.10.950.10:FF:000002">
    <property type="entry name" value="60S ribosomal protein L2"/>
    <property type="match status" value="1"/>
</dbReference>
<dbReference type="FunFam" id="2.30.30.30:FF:000006">
    <property type="entry name" value="60S ribosomal protein L8"/>
    <property type="match status" value="1"/>
</dbReference>
<dbReference type="Gene3D" id="2.30.30.30">
    <property type="match status" value="1"/>
</dbReference>
<dbReference type="Gene3D" id="2.40.50.140">
    <property type="entry name" value="Nucleic acid-binding proteins"/>
    <property type="match status" value="1"/>
</dbReference>
<dbReference type="Gene3D" id="4.10.950.10">
    <property type="entry name" value="Ribosomal protein L2, domain 3"/>
    <property type="match status" value="1"/>
</dbReference>
<dbReference type="InterPro" id="IPR012340">
    <property type="entry name" value="NA-bd_OB-fold"/>
</dbReference>
<dbReference type="InterPro" id="IPR014722">
    <property type="entry name" value="Rib_uL2_dom2"/>
</dbReference>
<dbReference type="InterPro" id="IPR002171">
    <property type="entry name" value="Ribosomal_uL2"/>
</dbReference>
<dbReference type="InterPro" id="IPR022669">
    <property type="entry name" value="Ribosomal_uL2_C"/>
</dbReference>
<dbReference type="InterPro" id="IPR022671">
    <property type="entry name" value="Ribosomal_uL2_CS"/>
</dbReference>
<dbReference type="InterPro" id="IPR014726">
    <property type="entry name" value="Ribosomal_uL2_dom3"/>
</dbReference>
<dbReference type="InterPro" id="IPR022666">
    <property type="entry name" value="Ribosomal_uL2_RNA-bd_dom"/>
</dbReference>
<dbReference type="InterPro" id="IPR008991">
    <property type="entry name" value="Translation_prot_SH3-like_sf"/>
</dbReference>
<dbReference type="PANTHER" id="PTHR13691:SF16">
    <property type="entry name" value="LARGE RIBOSOMAL SUBUNIT PROTEIN UL2"/>
    <property type="match status" value="1"/>
</dbReference>
<dbReference type="PANTHER" id="PTHR13691">
    <property type="entry name" value="RIBOSOMAL PROTEIN L2"/>
    <property type="match status" value="1"/>
</dbReference>
<dbReference type="Pfam" id="PF00181">
    <property type="entry name" value="Ribosomal_L2"/>
    <property type="match status" value="1"/>
</dbReference>
<dbReference type="Pfam" id="PF03947">
    <property type="entry name" value="Ribosomal_L2_C"/>
    <property type="match status" value="1"/>
</dbReference>
<dbReference type="PIRSF" id="PIRSF002158">
    <property type="entry name" value="Ribosomal_L2"/>
    <property type="match status" value="1"/>
</dbReference>
<dbReference type="SMART" id="SM01383">
    <property type="entry name" value="Ribosomal_L2"/>
    <property type="match status" value="1"/>
</dbReference>
<dbReference type="SMART" id="SM01382">
    <property type="entry name" value="Ribosomal_L2_C"/>
    <property type="match status" value="1"/>
</dbReference>
<dbReference type="SUPFAM" id="SSF50249">
    <property type="entry name" value="Nucleic acid-binding proteins"/>
    <property type="match status" value="1"/>
</dbReference>
<dbReference type="SUPFAM" id="SSF50104">
    <property type="entry name" value="Translation proteins SH3-like domain"/>
    <property type="match status" value="1"/>
</dbReference>
<dbReference type="PROSITE" id="PS00467">
    <property type="entry name" value="RIBOSOMAL_L2"/>
    <property type="match status" value="1"/>
</dbReference>
<sequence>MGRVIRNQRKGAGSIFTSHTRLRQGAAKLRTLDYAERHGYIRGIVKQIVHDSGRGAPLAKVVFRDPYKYRLREEIFIANEGVHTGQFIYAGKKASLNVGNVLPLGSVPEGTIVSNVEEKPGDRGALARASGNYVIIIGHNPDENKTRVRLPSGAKKVISSDARGVIGVIAGGGRVDKPLLKAGRAFHKYRLKRNSWPKTRGVAMNPVDHPHGGGNHQHIGKASTISRGAVSGQKAGLIAARRTGLLRGSQKTQD</sequence>
<gene>
    <name evidence="7" type="primary">RPL2B</name>
    <name type="synonym">RPL5A</name>
    <name type="ordered locus">YIL018W</name>
</gene>
<protein>
    <recommendedName>
        <fullName evidence="6">Large ribosomal subunit protein uL2B</fullName>
    </recommendedName>
    <alternativeName>
        <fullName evidence="7">60S ribosomal protein L2-B</fullName>
    </alternativeName>
    <alternativeName>
        <fullName>L5</fullName>
    </alternativeName>
    <alternativeName>
        <fullName>RP8</fullName>
    </alternativeName>
    <alternativeName>
        <fullName>YL6</fullName>
    </alternativeName>
</protein>
<evidence type="ECO:0000269" key="1">
    <source>
    </source>
</evidence>
<evidence type="ECO:0000269" key="2">
    <source>
    </source>
</evidence>
<evidence type="ECO:0000269" key="3">
    <source>
    </source>
</evidence>
<evidence type="ECO:0000269" key="4">
    <source>
    </source>
</evidence>
<evidence type="ECO:0000269" key="5">
    <source>
    </source>
</evidence>
<evidence type="ECO:0000303" key="6">
    <source>
    </source>
</evidence>
<evidence type="ECO:0000303" key="7">
    <source>
    </source>
</evidence>
<evidence type="ECO:0000305" key="8"/>
<evidence type="ECO:0000305" key="9">
    <source>
    </source>
</evidence>
<evidence type="ECO:0000305" key="10">
    <source>
    </source>
</evidence>
<evidence type="ECO:0007744" key="11">
    <source>
    </source>
</evidence>
<evidence type="ECO:0007744" key="12">
    <source>
    </source>
</evidence>
<evidence type="ECO:0007744" key="13">
    <source>
    </source>
</evidence>
<organism>
    <name type="scientific">Saccharomyces cerevisiae (strain ATCC 204508 / S288c)</name>
    <name type="common">Baker's yeast</name>
    <dbReference type="NCBI Taxonomy" id="559292"/>
    <lineage>
        <taxon>Eukaryota</taxon>
        <taxon>Fungi</taxon>
        <taxon>Dikarya</taxon>
        <taxon>Ascomycota</taxon>
        <taxon>Saccharomycotina</taxon>
        <taxon>Saccharomycetes</taxon>
        <taxon>Saccharomycetales</taxon>
        <taxon>Saccharomycetaceae</taxon>
        <taxon>Saccharomyces</taxon>
    </lineage>
</organism>
<feature type="initiator methionine" description="Removed" evidence="3 4">
    <location>
        <position position="1"/>
    </location>
</feature>
<feature type="chain" id="PRO_0000409769" description="Large ribosomal subunit protein uL2B">
    <location>
        <begin position="2"/>
        <end position="254"/>
    </location>
</feature>
<feature type="modified residue" description="Phosphoserine" evidence="11">
    <location>
        <position position="52"/>
    </location>
</feature>
<feature type="modified residue" description="Phosphoserine" evidence="12">
    <location>
        <position position="95"/>
    </location>
</feature>
<feature type="modified residue" description="Phosphoserine" evidence="11">
    <location>
        <position position="159"/>
    </location>
</feature>
<feature type="modified residue" description="Phosphoserine" evidence="11">
    <location>
        <position position="160"/>
    </location>
</feature>
<feature type="modified residue" description="Phosphoserine" evidence="11">
    <location>
        <position position="249"/>
    </location>
</feature>
<feature type="cross-link" description="Glycyl lysine isopeptide (Lys-Gly) (interchain with G-Cter in ubiquitin)" evidence="13">
    <location>
        <position position="46"/>
    </location>
</feature>
<feature type="cross-link" description="Glycyl lysine isopeptide (Lys-Gly) (interchain with G-Cter in ubiquitin)" evidence="13">
    <location>
        <position position="93"/>
    </location>
</feature>
<feature type="cross-link" description="Glycyl lysine isopeptide (Lys-Gly) (interchain with G-Cter in ubiquitin)" evidence="13">
    <location>
        <position position="119"/>
    </location>
</feature>
<feature type="cross-link" description="Glycyl lysine isopeptide (Lys-Gly) (interchain with G-Cter in ubiquitin)" evidence="13">
    <location>
        <position position="145"/>
    </location>
</feature>
<keyword id="KW-0002">3D-structure</keyword>
<keyword id="KW-0963">Cytoplasm</keyword>
<keyword id="KW-0903">Direct protein sequencing</keyword>
<keyword id="KW-1017">Isopeptide bond</keyword>
<keyword id="KW-0597">Phosphoprotein</keyword>
<keyword id="KW-1185">Reference proteome</keyword>
<keyword id="KW-0687">Ribonucleoprotein</keyword>
<keyword id="KW-0689">Ribosomal protein</keyword>
<keyword id="KW-0694">RNA-binding</keyword>
<keyword id="KW-0699">rRNA-binding</keyword>
<keyword id="KW-0832">Ubl conjugation</keyword>
<comment type="function">
    <text evidence="9">Component of the ribosome, a large ribonucleoprotein complex responsible for the synthesis of proteins in the cell. The small ribosomal subunit (SSU) binds messenger RNAs (mRNAs) and translates the encoded message by selecting cognate aminoacyl-transfer RNA (tRNA) molecules. The large subunit (LSU) contains the ribosomal catalytic site termed the peptidyl transferase center (PTC), which catalyzes the formation of peptide bonds, thereby polymerizing the amino acids delivered by tRNAs into a polypeptide chain. The nascent polypeptides leave the ribosome through a tunnel in the LSU and interact with protein factors that function in enzymatic processing, targeting, and the membrane insertion of nascent chains at the exit of the ribosomal tunnel.</text>
</comment>
<comment type="subunit">
    <text evidence="5 10">Component of the large ribosomal subunit (LSU). Mature yeast ribosomes consist of a small (40S) and a large (60S) subunit. The 40S small subunit contains 1 molecule of ribosomal RNA (18S rRNA) and 33 different proteins (encoded by 57 genes). The large 60S subunit contains 3 rRNA molecules (25S, 5.8S and 5S rRNA) and 46 different proteins (encoded by 81 genes) (PubMed:22096102, PubMed:9559554).</text>
</comment>
<comment type="subcellular location">
    <subcellularLocation>
        <location evidence="5">Cytoplasm</location>
    </subcellularLocation>
</comment>
<comment type="mass spectrometry">
    <text>Average mass.</text>
</comment>
<comment type="miscellaneous">
    <text evidence="2">Present with 4050 molecules/cell in log phase SD medium.</text>
</comment>
<comment type="miscellaneous">
    <text evidence="8">There are 2 genes for uL2 in yeast.</text>
</comment>
<comment type="similarity">
    <text evidence="8">Belongs to the universal ribosomal protein uL2 family.</text>
</comment>
<reference key="1">
    <citation type="journal article" date="1995" name="Mol. Gen. Genet.">
        <title>Characterisation of Saccharomyces cerevisiae genes encoding ribosomal protein YL6.</title>
        <authorList>
            <person name="Moore J."/>
            <person name="Jacobs H.T."/>
            <person name="Kaiser K."/>
        </authorList>
    </citation>
    <scope>NUCLEOTIDE SEQUENCE [MRNA]</scope>
    <source>
        <strain>ATCC 204660 / DBY746</strain>
    </source>
</reference>
<reference key="2">
    <citation type="journal article" date="1997" name="Nature">
        <title>The nucleotide sequence of Saccharomyces cerevisiae chromosome IX.</title>
        <authorList>
            <person name="Churcher C.M."/>
            <person name="Bowman S."/>
            <person name="Badcock K."/>
            <person name="Bankier A.T."/>
            <person name="Brown D."/>
            <person name="Chillingworth T."/>
            <person name="Connor R."/>
            <person name="Devlin K."/>
            <person name="Gentles S."/>
            <person name="Hamlin N."/>
            <person name="Harris D.E."/>
            <person name="Horsnell T."/>
            <person name="Hunt S."/>
            <person name="Jagels K."/>
            <person name="Jones M."/>
            <person name="Lye G."/>
            <person name="Moule S."/>
            <person name="Odell C."/>
            <person name="Pearson D."/>
            <person name="Rajandream M.A."/>
            <person name="Rice P."/>
            <person name="Rowley N."/>
            <person name="Skelton J."/>
            <person name="Smith V."/>
            <person name="Walsh S.V."/>
            <person name="Whitehead S."/>
            <person name="Barrell B.G."/>
        </authorList>
    </citation>
    <scope>NUCLEOTIDE SEQUENCE [LARGE SCALE GENOMIC DNA]</scope>
    <source>
        <strain>ATCC 204508 / S288c</strain>
    </source>
</reference>
<reference key="3">
    <citation type="journal article" date="2014" name="G3 (Bethesda)">
        <title>The reference genome sequence of Saccharomyces cerevisiae: Then and now.</title>
        <authorList>
            <person name="Engel S.R."/>
            <person name="Dietrich F.S."/>
            <person name="Fisk D.G."/>
            <person name="Binkley G."/>
            <person name="Balakrishnan R."/>
            <person name="Costanzo M.C."/>
            <person name="Dwight S.S."/>
            <person name="Hitz B.C."/>
            <person name="Karra K."/>
            <person name="Nash R.S."/>
            <person name="Weng S."/>
            <person name="Wong E.D."/>
            <person name="Lloyd P."/>
            <person name="Skrzypek M.S."/>
            <person name="Miyasato S.R."/>
            <person name="Simison M."/>
            <person name="Cherry J.M."/>
        </authorList>
    </citation>
    <scope>GENOME REANNOTATION</scope>
    <source>
        <strain>ATCC 204508 / S288c</strain>
    </source>
</reference>
<reference key="4">
    <citation type="journal article" date="1984" name="Mol. Gen. Genet.">
        <title>Yeast ribosomal proteins. VIII. Isolation of two proteins and sequence characterization of twenty-four proteins from cytoplasmic ribosomes.</title>
        <authorList>
            <person name="Otaka E."/>
            <person name="Higo K."/>
            <person name="Itoh T."/>
        </authorList>
    </citation>
    <scope>PARTIAL PROTEIN SEQUENCE OF 2-41</scope>
    <scope>CLEAVAGE OF INITIATOR METHIONINE</scope>
</reference>
<reference key="5">
    <citation type="journal article" date="1992" name="J. Biol. Chem.">
        <title>NH2-terminal acetylation of ribosomal proteins of Saccharomyces cerevisiae.</title>
        <authorList>
            <person name="Takakura H."/>
            <person name="Tsunasawa S."/>
            <person name="Miyagi M."/>
            <person name="Warner J.R."/>
        </authorList>
    </citation>
    <scope>PROTEIN SEQUENCE OF 2-21</scope>
</reference>
<reference key="6">
    <citation type="journal article" date="1998" name="Yeast">
        <title>The list of cytoplasmic ribosomal proteins of Saccharomyces cerevisiae.</title>
        <authorList>
            <person name="Planta R.J."/>
            <person name="Mager W.H."/>
        </authorList>
    </citation>
    <scope>NOMENCLATURE</scope>
    <scope>SUBUNIT</scope>
</reference>
<reference key="7">
    <citation type="journal article" date="2002" name="Proc. Natl. Acad. Sci. U.S.A.">
        <title>Direct mass spectrometric analysis of intact proteins of the yeast large ribosomal subunit using capillary LC/FTICR.</title>
        <authorList>
            <person name="Lee S.-W."/>
            <person name="Berger S.J."/>
            <person name="Martinovic S."/>
            <person name="Pasa-Tolic L."/>
            <person name="Anderson G.A."/>
            <person name="Shen Y."/>
            <person name="Zhao R."/>
            <person name="Smith R.D."/>
        </authorList>
    </citation>
    <scope>MASS SPECTROMETRY</scope>
</reference>
<reference key="8">
    <citation type="journal article" date="2003" name="Nature">
        <title>Global analysis of protein expression in yeast.</title>
        <authorList>
            <person name="Ghaemmaghami S."/>
            <person name="Huh W.-K."/>
            <person name="Bower K."/>
            <person name="Howson R.W."/>
            <person name="Belle A."/>
            <person name="Dephoure N."/>
            <person name="O'Shea E.K."/>
            <person name="Weissman J.S."/>
        </authorList>
    </citation>
    <scope>LEVEL OF PROTEIN EXPRESSION [LARGE SCALE ANALYSIS]</scope>
</reference>
<reference key="9">
    <citation type="journal article" date="2007" name="Proc. Natl. Acad. Sci. U.S.A.">
        <title>Analysis of phosphorylation sites on proteins from Saccharomyces cerevisiae by electron transfer dissociation (ETD) mass spectrometry.</title>
        <authorList>
            <person name="Chi A."/>
            <person name="Huttenhower C."/>
            <person name="Geer L.Y."/>
            <person name="Coon J.J."/>
            <person name="Syka J.E.P."/>
            <person name="Bai D.L."/>
            <person name="Shabanowitz J."/>
            <person name="Burke D.J."/>
            <person name="Troyanskaya O.G."/>
            <person name="Hunt D.F."/>
        </authorList>
    </citation>
    <scope>PHOSPHORYLATION [LARGE SCALE ANALYSIS] AT SER-52; SER-159; SER-160 AND SER-249</scope>
    <scope>IDENTIFICATION BY MASS SPECTROMETRY [LARGE SCALE ANALYSIS]</scope>
</reference>
<reference key="10">
    <citation type="journal article" date="2009" name="Science">
        <title>Global analysis of Cdk1 substrate phosphorylation sites provides insights into evolution.</title>
        <authorList>
            <person name="Holt L.J."/>
            <person name="Tuch B.B."/>
            <person name="Villen J."/>
            <person name="Johnson A.D."/>
            <person name="Gygi S.P."/>
            <person name="Morgan D.O."/>
        </authorList>
    </citation>
    <scope>PHOSPHORYLATION [LARGE SCALE ANALYSIS] AT SER-95</scope>
    <scope>IDENTIFICATION BY MASS SPECTROMETRY [LARGE SCALE ANALYSIS]</scope>
</reference>
<reference key="11">
    <citation type="journal article" date="2011" name="Science">
        <title>The structure of the eukaryotic ribosome at 3.0 A resolution.</title>
        <authorList>
            <person name="Ben-Shem A."/>
            <person name="Garreau de Loubresse N."/>
            <person name="Melnikov S."/>
            <person name="Jenner L."/>
            <person name="Yusupova G."/>
            <person name="Yusupov M."/>
        </authorList>
    </citation>
    <scope>SUBUNIT</scope>
    <scope>SUBCELLULAR LOCATION</scope>
</reference>
<reference key="12">
    <citation type="journal article" date="2012" name="Proteomics">
        <title>Sites of ubiquitin attachment in Saccharomyces cerevisiae.</title>
        <authorList>
            <person name="Starita L.M."/>
            <person name="Lo R.S."/>
            <person name="Eng J.K."/>
            <person name="von Haller P.D."/>
            <person name="Fields S."/>
        </authorList>
    </citation>
    <scope>UBIQUITINATION [LARGE SCALE ANALYSIS] AT LYS-46; LYS-93; LYS-119 AND LYS-145</scope>
    <scope>IDENTIFICATION BY MASS SPECTROMETRY [LARGE SCALE ANALYSIS]</scope>
</reference>
<reference key="13">
    <citation type="journal article" date="2014" name="Curr. Opin. Struct. Biol.">
        <title>A new system for naming ribosomal proteins.</title>
        <authorList>
            <person name="Ban N."/>
            <person name="Beckmann R."/>
            <person name="Cate J.H.D."/>
            <person name="Dinman J.D."/>
            <person name="Dragon F."/>
            <person name="Ellis S.R."/>
            <person name="Lafontaine D.L.J."/>
            <person name="Lindahl L."/>
            <person name="Liljas A."/>
            <person name="Lipton J.M."/>
            <person name="McAlear M.A."/>
            <person name="Moore P.B."/>
            <person name="Noller H.F."/>
            <person name="Ortega J."/>
            <person name="Panse V.G."/>
            <person name="Ramakrishnan V."/>
            <person name="Spahn C.M.T."/>
            <person name="Steitz T.A."/>
            <person name="Tchorzewski M."/>
            <person name="Tollervey D."/>
            <person name="Warren A.J."/>
            <person name="Williamson J.R."/>
            <person name="Wilson D."/>
            <person name="Yonath A."/>
            <person name="Yusupov M."/>
        </authorList>
    </citation>
    <scope>NOMENCLATURE</scope>
</reference>